<name>GLGB_BACC2</name>
<protein>
    <recommendedName>
        <fullName evidence="1">1,4-alpha-glucan branching enzyme GlgB</fullName>
        <ecNumber evidence="1">2.4.1.18</ecNumber>
    </recommendedName>
    <alternativeName>
        <fullName evidence="1">1,4-alpha-D-glucan:1,4-alpha-D-glucan 6-glucosyl-transferase</fullName>
    </alternativeName>
    <alternativeName>
        <fullName evidence="1">Alpha-(1-&gt;4)-glucan branching enzyme</fullName>
    </alternativeName>
    <alternativeName>
        <fullName evidence="1">Glycogen branching enzyme</fullName>
        <shortName evidence="1">BE</shortName>
    </alternativeName>
</protein>
<comment type="function">
    <text evidence="1">Catalyzes the formation of the alpha-1,6-glucosidic linkages in glycogen by scission of a 1,4-alpha-linked oligosaccharide from growing alpha-1,4-glucan chains and the subsequent attachment of the oligosaccharide to the alpha-1,6 position.</text>
</comment>
<comment type="catalytic activity">
    <reaction evidence="1">
        <text>Transfers a segment of a (1-&gt;4)-alpha-D-glucan chain to a primary hydroxy group in a similar glucan chain.</text>
        <dbReference type="EC" id="2.4.1.18"/>
    </reaction>
</comment>
<comment type="pathway">
    <text evidence="1">Glycan biosynthesis; glycogen biosynthesis.</text>
</comment>
<comment type="subunit">
    <text evidence="1">Monomer.</text>
</comment>
<comment type="similarity">
    <text evidence="1">Belongs to the glycosyl hydrolase 13 family. GlgB subfamily.</text>
</comment>
<gene>
    <name evidence="1" type="primary">glgB</name>
    <name type="ordered locus">BCG9842_B0238</name>
</gene>
<feature type="chain" id="PRO_1000131808" description="1,4-alpha-glucan branching enzyme GlgB">
    <location>
        <begin position="1"/>
        <end position="645"/>
    </location>
</feature>
<feature type="region of interest" description="Disordered" evidence="2">
    <location>
        <begin position="619"/>
        <end position="645"/>
    </location>
</feature>
<feature type="compositionally biased region" description="Polar residues" evidence="2">
    <location>
        <begin position="636"/>
        <end position="645"/>
    </location>
</feature>
<feature type="active site" description="Nucleophile" evidence="1">
    <location>
        <position position="309"/>
    </location>
</feature>
<feature type="active site" description="Proton donor" evidence="1">
    <location>
        <position position="352"/>
    </location>
</feature>
<reference key="1">
    <citation type="submission" date="2008-10" db="EMBL/GenBank/DDBJ databases">
        <title>Genome sequence of Bacillus cereus G9842.</title>
        <authorList>
            <person name="Dodson R.J."/>
            <person name="Durkin A.S."/>
            <person name="Rosovitz M.J."/>
            <person name="Rasko D.A."/>
            <person name="Hoffmaster A."/>
            <person name="Ravel J."/>
            <person name="Sutton G."/>
        </authorList>
    </citation>
    <scope>NUCLEOTIDE SEQUENCE [LARGE SCALE GENOMIC DNA]</scope>
    <source>
        <strain>G9842</strain>
    </source>
</reference>
<sequence length="645" mass="75888">MSVINCEEVKRDEFHTEKYYESYNIFGAHVVTEDEIQGVRFTVWAPHAKAMSVVGDFNEWDYEQHKMLQVTEEGIWSLFIPHIEEGEIYKYAIETLAGDVILKADPYAIYAEVRPNTASVVFDIKGYEWNDKNWTRKKKKKPIYKEAMTVYELHFGSWKKKEDGTLYSYREMVEELIPYVVEHQFTHIEIMPLVEHPYDRSWGYQGTGYYAATSRFGTPHDLMYFVDECHKYGIGVILDWVPGHFCKDAHGLYLFDGTPTYEYKDKDVQENPVWGTVNFDLGKREVRNFLISNALFWMRYFHIDGFRVDAVANMLYWNKEGQEQSNEHAVSFLRELNEAVFAEDEDFLMTAEDSTAWPLVTTPTYEGGLGFNYKWNMGWMNDVLKYMECAPEYRKHIHEKMTFSLLYAYSENFILPLSHDEVVHGKKSLLNKMPGDYWDKFAQLRLLYGYFFTHPGKKLLFMGGEFGQFDEWKDLEDLDWNLHDFEMHRYMHDYFKELIALYKRSKPLWQLDHSPEGFQWIDANNNEQSIFSFIRQGDKQEDALVVVCNFTKATYENYKVGVPDFEYYNEILNSDAEQYGGSGQVNKKRLKTILEPYHNQAAHVEITIPPFGVSILRPVKTRKGSKKQDGSKTKVRSNVTSRGKR</sequence>
<accession>B7IM37</accession>
<evidence type="ECO:0000255" key="1">
    <source>
        <dbReference type="HAMAP-Rule" id="MF_00685"/>
    </source>
</evidence>
<evidence type="ECO:0000256" key="2">
    <source>
        <dbReference type="SAM" id="MobiDB-lite"/>
    </source>
</evidence>
<proteinExistence type="inferred from homology"/>
<organism>
    <name type="scientific">Bacillus cereus (strain G9842)</name>
    <dbReference type="NCBI Taxonomy" id="405531"/>
    <lineage>
        <taxon>Bacteria</taxon>
        <taxon>Bacillati</taxon>
        <taxon>Bacillota</taxon>
        <taxon>Bacilli</taxon>
        <taxon>Bacillales</taxon>
        <taxon>Bacillaceae</taxon>
        <taxon>Bacillus</taxon>
        <taxon>Bacillus cereus group</taxon>
    </lineage>
</organism>
<keyword id="KW-0119">Carbohydrate metabolism</keyword>
<keyword id="KW-0320">Glycogen biosynthesis</keyword>
<keyword id="KW-0321">Glycogen metabolism</keyword>
<keyword id="KW-0328">Glycosyltransferase</keyword>
<keyword id="KW-0808">Transferase</keyword>
<dbReference type="EC" id="2.4.1.18" evidence="1"/>
<dbReference type="EMBL" id="CP001186">
    <property type="protein sequence ID" value="ACK97294.1"/>
    <property type="molecule type" value="Genomic_DNA"/>
</dbReference>
<dbReference type="RefSeq" id="WP_000111401.1">
    <property type="nucleotide sequence ID" value="NC_011772.1"/>
</dbReference>
<dbReference type="SMR" id="B7IM37"/>
<dbReference type="CAZy" id="CBM48">
    <property type="family name" value="Carbohydrate-Binding Module Family 48"/>
</dbReference>
<dbReference type="CAZy" id="GH13">
    <property type="family name" value="Glycoside Hydrolase Family 13"/>
</dbReference>
<dbReference type="KEGG" id="bcg:BCG9842_B0238"/>
<dbReference type="HOGENOM" id="CLU_004245_4_0_9"/>
<dbReference type="UniPathway" id="UPA00164"/>
<dbReference type="Proteomes" id="UP000006744">
    <property type="component" value="Chromosome"/>
</dbReference>
<dbReference type="GO" id="GO:0005829">
    <property type="term" value="C:cytosol"/>
    <property type="evidence" value="ECO:0007669"/>
    <property type="project" value="TreeGrafter"/>
</dbReference>
<dbReference type="GO" id="GO:0003844">
    <property type="term" value="F:1,4-alpha-glucan branching enzyme activity"/>
    <property type="evidence" value="ECO:0007669"/>
    <property type="project" value="UniProtKB-UniRule"/>
</dbReference>
<dbReference type="GO" id="GO:0043169">
    <property type="term" value="F:cation binding"/>
    <property type="evidence" value="ECO:0007669"/>
    <property type="project" value="InterPro"/>
</dbReference>
<dbReference type="GO" id="GO:0004553">
    <property type="term" value="F:hydrolase activity, hydrolyzing O-glycosyl compounds"/>
    <property type="evidence" value="ECO:0007669"/>
    <property type="project" value="InterPro"/>
</dbReference>
<dbReference type="GO" id="GO:0005978">
    <property type="term" value="P:glycogen biosynthetic process"/>
    <property type="evidence" value="ECO:0007669"/>
    <property type="project" value="UniProtKB-UniRule"/>
</dbReference>
<dbReference type="CDD" id="cd11322">
    <property type="entry name" value="AmyAc_Glg_BE"/>
    <property type="match status" value="1"/>
</dbReference>
<dbReference type="CDD" id="cd02855">
    <property type="entry name" value="E_set_GBE_prok_N"/>
    <property type="match status" value="1"/>
</dbReference>
<dbReference type="FunFam" id="2.60.40.10:FF:000169">
    <property type="entry name" value="1,4-alpha-glucan branching enzyme GlgB"/>
    <property type="match status" value="1"/>
</dbReference>
<dbReference type="FunFam" id="2.60.40.1180:FF:000002">
    <property type="entry name" value="1,4-alpha-glucan branching enzyme GlgB"/>
    <property type="match status" value="1"/>
</dbReference>
<dbReference type="FunFam" id="3.20.20.80:FF:000003">
    <property type="entry name" value="1,4-alpha-glucan branching enzyme GlgB"/>
    <property type="match status" value="1"/>
</dbReference>
<dbReference type="Gene3D" id="3.20.20.80">
    <property type="entry name" value="Glycosidases"/>
    <property type="match status" value="1"/>
</dbReference>
<dbReference type="Gene3D" id="2.60.40.1180">
    <property type="entry name" value="Golgi alpha-mannosidase II"/>
    <property type="match status" value="1"/>
</dbReference>
<dbReference type="Gene3D" id="2.60.40.10">
    <property type="entry name" value="Immunoglobulins"/>
    <property type="match status" value="1"/>
</dbReference>
<dbReference type="HAMAP" id="MF_00685">
    <property type="entry name" value="GlgB"/>
    <property type="match status" value="1"/>
</dbReference>
<dbReference type="InterPro" id="IPR006048">
    <property type="entry name" value="A-amylase/branching_C"/>
</dbReference>
<dbReference type="InterPro" id="IPR037439">
    <property type="entry name" value="Branching_enzy"/>
</dbReference>
<dbReference type="InterPro" id="IPR006407">
    <property type="entry name" value="GlgB"/>
</dbReference>
<dbReference type="InterPro" id="IPR044143">
    <property type="entry name" value="GlgB_N_E_set_prok"/>
</dbReference>
<dbReference type="InterPro" id="IPR006047">
    <property type="entry name" value="Glyco_hydro_13_cat_dom"/>
</dbReference>
<dbReference type="InterPro" id="IPR004193">
    <property type="entry name" value="Glyco_hydro_13_N"/>
</dbReference>
<dbReference type="InterPro" id="IPR013780">
    <property type="entry name" value="Glyco_hydro_b"/>
</dbReference>
<dbReference type="InterPro" id="IPR017853">
    <property type="entry name" value="Glycoside_hydrolase_SF"/>
</dbReference>
<dbReference type="InterPro" id="IPR013783">
    <property type="entry name" value="Ig-like_fold"/>
</dbReference>
<dbReference type="NCBIfam" id="TIGR01515">
    <property type="entry name" value="branching_enzym"/>
    <property type="match status" value="1"/>
</dbReference>
<dbReference type="NCBIfam" id="NF003811">
    <property type="entry name" value="PRK05402.1"/>
    <property type="match status" value="1"/>
</dbReference>
<dbReference type="NCBIfam" id="NF008967">
    <property type="entry name" value="PRK12313.1"/>
    <property type="match status" value="1"/>
</dbReference>
<dbReference type="PANTHER" id="PTHR43651">
    <property type="entry name" value="1,4-ALPHA-GLUCAN-BRANCHING ENZYME"/>
    <property type="match status" value="1"/>
</dbReference>
<dbReference type="PANTHER" id="PTHR43651:SF3">
    <property type="entry name" value="1,4-ALPHA-GLUCAN-BRANCHING ENZYME"/>
    <property type="match status" value="1"/>
</dbReference>
<dbReference type="Pfam" id="PF00128">
    <property type="entry name" value="Alpha-amylase"/>
    <property type="match status" value="2"/>
</dbReference>
<dbReference type="Pfam" id="PF02806">
    <property type="entry name" value="Alpha-amylase_C"/>
    <property type="match status" value="1"/>
</dbReference>
<dbReference type="Pfam" id="PF02922">
    <property type="entry name" value="CBM_48"/>
    <property type="match status" value="1"/>
</dbReference>
<dbReference type="PIRSF" id="PIRSF000463">
    <property type="entry name" value="GlgB"/>
    <property type="match status" value="1"/>
</dbReference>
<dbReference type="SMART" id="SM00642">
    <property type="entry name" value="Aamy"/>
    <property type="match status" value="1"/>
</dbReference>
<dbReference type="SUPFAM" id="SSF51445">
    <property type="entry name" value="(Trans)glycosidases"/>
    <property type="match status" value="1"/>
</dbReference>
<dbReference type="SUPFAM" id="SSF51011">
    <property type="entry name" value="Glycosyl hydrolase domain"/>
    <property type="match status" value="1"/>
</dbReference>